<dbReference type="EMBL" id="AE014134">
    <property type="protein sequence ID" value="AAF52685.1"/>
    <property type="molecule type" value="Genomic_DNA"/>
</dbReference>
<dbReference type="EMBL" id="BT012436">
    <property type="protein sequence ID" value="AAS93707.1"/>
    <property type="molecule type" value="mRNA"/>
</dbReference>
<dbReference type="RefSeq" id="NP_523514.1">
    <property type="nucleotide sequence ID" value="NM_078790.3"/>
</dbReference>
<dbReference type="BioGRID" id="60301">
    <property type="interactions" value="1"/>
</dbReference>
<dbReference type="FunCoup" id="Q9VLK4">
    <property type="interactions" value="23"/>
</dbReference>
<dbReference type="IntAct" id="Q9VLK4">
    <property type="interactions" value="3"/>
</dbReference>
<dbReference type="STRING" id="7227.FBpp0079308"/>
<dbReference type="PaxDb" id="7227-FBpp0079308"/>
<dbReference type="DNASU" id="34181"/>
<dbReference type="EnsemblMetazoa" id="FBtr0079699">
    <property type="protein sequence ID" value="FBpp0079307"/>
    <property type="gene ID" value="FBgn0032048"/>
</dbReference>
<dbReference type="GeneID" id="34181"/>
<dbReference type="KEGG" id="dme:Dmel_CG13094"/>
<dbReference type="AGR" id="FB:FBgn0032048"/>
<dbReference type="CTD" id="34181"/>
<dbReference type="FlyBase" id="FBgn0032048">
    <property type="gene designation" value="Dh31"/>
</dbReference>
<dbReference type="VEuPathDB" id="VectorBase:FBgn0032048"/>
<dbReference type="eggNOG" id="ENOG502SAVV">
    <property type="taxonomic scope" value="Eukaryota"/>
</dbReference>
<dbReference type="HOGENOM" id="CLU_152129_0_0_1"/>
<dbReference type="InParanoid" id="Q9VLK4"/>
<dbReference type="OrthoDB" id="6495587at2759"/>
<dbReference type="BioGRID-ORCS" id="34181">
    <property type="hits" value="0 hits in 1 CRISPR screen"/>
</dbReference>
<dbReference type="GenomeRNAi" id="34181"/>
<dbReference type="PRO" id="PR:Q9VLK4"/>
<dbReference type="Proteomes" id="UP000000803">
    <property type="component" value="Chromosome 2L"/>
</dbReference>
<dbReference type="Bgee" id="FBgn0032048">
    <property type="expression patterns" value="Expressed in adult posterior midgut class II enteroendocrine cell in adult midgut (Drosophila) and 86 other cell types or tissues"/>
</dbReference>
<dbReference type="ExpressionAtlas" id="Q9VLK4">
    <property type="expression patterns" value="baseline and differential"/>
</dbReference>
<dbReference type="GO" id="GO:0005737">
    <property type="term" value="C:cytoplasm"/>
    <property type="evidence" value="ECO:0000314"/>
    <property type="project" value="FlyBase"/>
</dbReference>
<dbReference type="GO" id="GO:0005615">
    <property type="term" value="C:extracellular space"/>
    <property type="evidence" value="ECO:0000314"/>
    <property type="project" value="FlyBase"/>
</dbReference>
<dbReference type="GO" id="GO:0008613">
    <property type="term" value="F:diuretic hormone activity"/>
    <property type="evidence" value="ECO:0000314"/>
    <property type="project" value="FlyBase"/>
</dbReference>
<dbReference type="GO" id="GO:0001664">
    <property type="term" value="F:G protein-coupled receptor binding"/>
    <property type="evidence" value="ECO:0000353"/>
    <property type="project" value="FlyBase"/>
</dbReference>
<dbReference type="GO" id="GO:0007189">
    <property type="term" value="P:adenylate cyclase-activating G protein-coupled receptor signaling pathway"/>
    <property type="evidence" value="ECO:0000314"/>
    <property type="project" value="FlyBase"/>
</dbReference>
<dbReference type="GO" id="GO:0007589">
    <property type="term" value="P:body fluid secretion"/>
    <property type="evidence" value="ECO:0000314"/>
    <property type="project" value="FlyBase"/>
</dbReference>
<dbReference type="GO" id="GO:0007619">
    <property type="term" value="P:courtship behavior"/>
    <property type="evidence" value="ECO:0000315"/>
    <property type="project" value="FlyBase"/>
</dbReference>
<dbReference type="GO" id="GO:0007186">
    <property type="term" value="P:G protein-coupled receptor signaling pathway"/>
    <property type="evidence" value="ECO:0000314"/>
    <property type="project" value="FlyBase"/>
</dbReference>
<dbReference type="GO" id="GO:2000252">
    <property type="term" value="P:negative regulation of feeding behavior"/>
    <property type="evidence" value="ECO:0000315"/>
    <property type="project" value="FlyBase"/>
</dbReference>
<dbReference type="GO" id="GO:0010841">
    <property type="term" value="P:positive regulation of circadian sleep/wake cycle, wakefulness"/>
    <property type="evidence" value="ECO:0000315"/>
    <property type="project" value="FlyBase"/>
</dbReference>
<dbReference type="GO" id="GO:0009266">
    <property type="term" value="P:response to temperature stimulus"/>
    <property type="evidence" value="ECO:0000315"/>
    <property type="project" value="FlyBase"/>
</dbReference>
<dbReference type="InterPro" id="IPR034439">
    <property type="entry name" value="DH2-like"/>
</dbReference>
<dbReference type="PANTHER" id="PTHR41146">
    <property type="entry name" value="DIURETIC HORMONE CLASS 2"/>
    <property type="match status" value="1"/>
</dbReference>
<dbReference type="PANTHER" id="PTHR41146:SF1">
    <property type="entry name" value="DIURETIC HORMONE CLASS 2"/>
    <property type="match status" value="1"/>
</dbReference>
<protein>
    <recommendedName>
        <fullName>Diuretic hormone class 2</fullName>
        <shortName>Diuretic peptide</shortName>
    </recommendedName>
    <alternativeName>
        <fullName>DH(31)</fullName>
    </alternativeName>
    <alternativeName>
        <fullName>DP</fullName>
    </alternativeName>
</protein>
<sequence>MTNRCACFALAFLLFCLLAISSIEAAPMPSQSNGGYGGAGYNELEEVPDDLLMELMTRFGRTIIRARNDLENSKRTVDFGLARGYSGTQEAKHRMGLAAANFAGGPGRRRRSETDV</sequence>
<reference key="1">
    <citation type="journal article" date="2000" name="Science">
        <title>The genome sequence of Drosophila melanogaster.</title>
        <authorList>
            <person name="Adams M.D."/>
            <person name="Celniker S.E."/>
            <person name="Holt R.A."/>
            <person name="Evans C.A."/>
            <person name="Gocayne J.D."/>
            <person name="Amanatides P.G."/>
            <person name="Scherer S.E."/>
            <person name="Li P.W."/>
            <person name="Hoskins R.A."/>
            <person name="Galle R.F."/>
            <person name="George R.A."/>
            <person name="Lewis S.E."/>
            <person name="Richards S."/>
            <person name="Ashburner M."/>
            <person name="Henderson S.N."/>
            <person name="Sutton G.G."/>
            <person name="Wortman J.R."/>
            <person name="Yandell M.D."/>
            <person name="Zhang Q."/>
            <person name="Chen L.X."/>
            <person name="Brandon R.C."/>
            <person name="Rogers Y.-H.C."/>
            <person name="Blazej R.G."/>
            <person name="Champe M."/>
            <person name="Pfeiffer B.D."/>
            <person name="Wan K.H."/>
            <person name="Doyle C."/>
            <person name="Baxter E.G."/>
            <person name="Helt G."/>
            <person name="Nelson C.R."/>
            <person name="Miklos G.L.G."/>
            <person name="Abril J.F."/>
            <person name="Agbayani A."/>
            <person name="An H.-J."/>
            <person name="Andrews-Pfannkoch C."/>
            <person name="Baldwin D."/>
            <person name="Ballew R.M."/>
            <person name="Basu A."/>
            <person name="Baxendale J."/>
            <person name="Bayraktaroglu L."/>
            <person name="Beasley E.M."/>
            <person name="Beeson K.Y."/>
            <person name="Benos P.V."/>
            <person name="Berman B.P."/>
            <person name="Bhandari D."/>
            <person name="Bolshakov S."/>
            <person name="Borkova D."/>
            <person name="Botchan M.R."/>
            <person name="Bouck J."/>
            <person name="Brokstein P."/>
            <person name="Brottier P."/>
            <person name="Burtis K.C."/>
            <person name="Busam D.A."/>
            <person name="Butler H."/>
            <person name="Cadieu E."/>
            <person name="Center A."/>
            <person name="Chandra I."/>
            <person name="Cherry J.M."/>
            <person name="Cawley S."/>
            <person name="Dahlke C."/>
            <person name="Davenport L.B."/>
            <person name="Davies P."/>
            <person name="de Pablos B."/>
            <person name="Delcher A."/>
            <person name="Deng Z."/>
            <person name="Mays A.D."/>
            <person name="Dew I."/>
            <person name="Dietz S.M."/>
            <person name="Dodson K."/>
            <person name="Doup L.E."/>
            <person name="Downes M."/>
            <person name="Dugan-Rocha S."/>
            <person name="Dunkov B.C."/>
            <person name="Dunn P."/>
            <person name="Durbin K.J."/>
            <person name="Evangelista C.C."/>
            <person name="Ferraz C."/>
            <person name="Ferriera S."/>
            <person name="Fleischmann W."/>
            <person name="Fosler C."/>
            <person name="Gabrielian A.E."/>
            <person name="Garg N.S."/>
            <person name="Gelbart W.M."/>
            <person name="Glasser K."/>
            <person name="Glodek A."/>
            <person name="Gong F."/>
            <person name="Gorrell J.H."/>
            <person name="Gu Z."/>
            <person name="Guan P."/>
            <person name="Harris M."/>
            <person name="Harris N.L."/>
            <person name="Harvey D.A."/>
            <person name="Heiman T.J."/>
            <person name="Hernandez J.R."/>
            <person name="Houck J."/>
            <person name="Hostin D."/>
            <person name="Houston K.A."/>
            <person name="Howland T.J."/>
            <person name="Wei M.-H."/>
            <person name="Ibegwam C."/>
            <person name="Jalali M."/>
            <person name="Kalush F."/>
            <person name="Karpen G.H."/>
            <person name="Ke Z."/>
            <person name="Kennison J.A."/>
            <person name="Ketchum K.A."/>
            <person name="Kimmel B.E."/>
            <person name="Kodira C.D."/>
            <person name="Kraft C.L."/>
            <person name="Kravitz S."/>
            <person name="Kulp D."/>
            <person name="Lai Z."/>
            <person name="Lasko P."/>
            <person name="Lei Y."/>
            <person name="Levitsky A.A."/>
            <person name="Li J.H."/>
            <person name="Li Z."/>
            <person name="Liang Y."/>
            <person name="Lin X."/>
            <person name="Liu X."/>
            <person name="Mattei B."/>
            <person name="McIntosh T.C."/>
            <person name="McLeod M.P."/>
            <person name="McPherson D."/>
            <person name="Merkulov G."/>
            <person name="Milshina N.V."/>
            <person name="Mobarry C."/>
            <person name="Morris J."/>
            <person name="Moshrefi A."/>
            <person name="Mount S.M."/>
            <person name="Moy M."/>
            <person name="Murphy B."/>
            <person name="Murphy L."/>
            <person name="Muzny D.M."/>
            <person name="Nelson D.L."/>
            <person name="Nelson D.R."/>
            <person name="Nelson K.A."/>
            <person name="Nixon K."/>
            <person name="Nusskern D.R."/>
            <person name="Pacleb J.M."/>
            <person name="Palazzolo M."/>
            <person name="Pittman G.S."/>
            <person name="Pan S."/>
            <person name="Pollard J."/>
            <person name="Puri V."/>
            <person name="Reese M.G."/>
            <person name="Reinert K."/>
            <person name="Remington K."/>
            <person name="Saunders R.D.C."/>
            <person name="Scheeler F."/>
            <person name="Shen H."/>
            <person name="Shue B.C."/>
            <person name="Siden-Kiamos I."/>
            <person name="Simpson M."/>
            <person name="Skupski M.P."/>
            <person name="Smith T.J."/>
            <person name="Spier E."/>
            <person name="Spradling A.C."/>
            <person name="Stapleton M."/>
            <person name="Strong R."/>
            <person name="Sun E."/>
            <person name="Svirskas R."/>
            <person name="Tector C."/>
            <person name="Turner R."/>
            <person name="Venter E."/>
            <person name="Wang A.H."/>
            <person name="Wang X."/>
            <person name="Wang Z.-Y."/>
            <person name="Wassarman D.A."/>
            <person name="Weinstock G.M."/>
            <person name="Weissenbach J."/>
            <person name="Williams S.M."/>
            <person name="Woodage T."/>
            <person name="Worley K.C."/>
            <person name="Wu D."/>
            <person name="Yang S."/>
            <person name="Yao Q.A."/>
            <person name="Ye J."/>
            <person name="Yeh R.-F."/>
            <person name="Zaveri J.S."/>
            <person name="Zhan M."/>
            <person name="Zhang G."/>
            <person name="Zhao Q."/>
            <person name="Zheng L."/>
            <person name="Zheng X.H."/>
            <person name="Zhong F.N."/>
            <person name="Zhong W."/>
            <person name="Zhou X."/>
            <person name="Zhu S.C."/>
            <person name="Zhu X."/>
            <person name="Smith H.O."/>
            <person name="Gibbs R.A."/>
            <person name="Myers E.W."/>
            <person name="Rubin G.M."/>
            <person name="Venter J.C."/>
        </authorList>
    </citation>
    <scope>NUCLEOTIDE SEQUENCE [LARGE SCALE GENOMIC DNA]</scope>
    <source>
        <strain>Berkeley</strain>
    </source>
</reference>
<reference key="2">
    <citation type="journal article" date="2002" name="Genome Biol.">
        <title>Annotation of the Drosophila melanogaster euchromatic genome: a systematic review.</title>
        <authorList>
            <person name="Misra S."/>
            <person name="Crosby M.A."/>
            <person name="Mungall C.J."/>
            <person name="Matthews B.B."/>
            <person name="Campbell K.S."/>
            <person name="Hradecky P."/>
            <person name="Huang Y."/>
            <person name="Kaminker J.S."/>
            <person name="Millburn G.H."/>
            <person name="Prochnik S.E."/>
            <person name="Smith C.D."/>
            <person name="Tupy J.L."/>
            <person name="Whitfield E.J."/>
            <person name="Bayraktaroglu L."/>
            <person name="Berman B.P."/>
            <person name="Bettencourt B.R."/>
            <person name="Celniker S.E."/>
            <person name="de Grey A.D.N.J."/>
            <person name="Drysdale R.A."/>
            <person name="Harris N.L."/>
            <person name="Richter J."/>
            <person name="Russo S."/>
            <person name="Schroeder A.J."/>
            <person name="Shu S.Q."/>
            <person name="Stapleton M."/>
            <person name="Yamada C."/>
            <person name="Ashburner M."/>
            <person name="Gelbart W.M."/>
            <person name="Rubin G.M."/>
            <person name="Lewis S.E."/>
        </authorList>
    </citation>
    <scope>GENOME REANNOTATION</scope>
    <source>
        <strain>Berkeley</strain>
    </source>
</reference>
<reference key="3">
    <citation type="submission" date="2004-04" db="EMBL/GenBank/DDBJ databases">
        <authorList>
            <person name="Stapleton M."/>
            <person name="Carlson J.W."/>
            <person name="Chavez C."/>
            <person name="Frise E."/>
            <person name="George R.A."/>
            <person name="Pacleb J.M."/>
            <person name="Park S."/>
            <person name="Wan K.H."/>
            <person name="Yu C."/>
            <person name="Rubin G.M."/>
            <person name="Celniker S.E."/>
        </authorList>
    </citation>
    <scope>NUCLEOTIDE SEQUENCE [LARGE SCALE MRNA]</scope>
    <source>
        <strain>Berkeley</strain>
        <tissue>Head</tissue>
    </source>
</reference>
<reference key="4">
    <citation type="journal article" date="2011" name="J. Proteome Res.">
        <title>Peptidomics and peptide hormone processing in the Drosophila midgut.</title>
        <authorList>
            <person name="Reiher W."/>
            <person name="Shirras C."/>
            <person name="Kahnt J."/>
            <person name="Baumeister S."/>
            <person name="Isaac R.E."/>
            <person name="Wegener C."/>
        </authorList>
    </citation>
    <scope>PROTEIN SEQUENCE OF 76-106</scope>
    <scope>IDENTIFICATION BY MASS SPECTROMETRY</scope>
    <scope>MASS SPECTROMETRY</scope>
    <scope>AMIDATION AT PRO-106</scope>
    <source>
        <tissue evidence="5">Midgut</tissue>
    </source>
</reference>
<reference key="5">
    <citation type="journal article" date="2001" name="J. Exp. Biol.">
        <title>The Drosophila melanogaster homologue of an insect calcitonin-like diuretic peptide stimulates V-ATPase activity in fruit fly Malpighian tubules.</title>
        <authorList>
            <person name="Coast G.M."/>
            <person name="Webster S.G."/>
            <person name="Schegg K.M."/>
            <person name="Tobe S.S."/>
            <person name="Schooley D.A."/>
        </authorList>
    </citation>
    <scope>FUNCTION</scope>
    <scope>SYNTHESIS OF 76-106</scope>
</reference>
<accession>Q9VLK4</accession>
<gene>
    <name type="primary">Dh31</name>
    <name type="ORF">CG13094</name>
</gene>
<proteinExistence type="evidence at protein level"/>
<keyword id="KW-0027">Amidation</keyword>
<keyword id="KW-0165">Cleavage on pair of basic residues</keyword>
<keyword id="KW-0903">Direct protein sequencing</keyword>
<keyword id="KW-0372">Hormone</keyword>
<keyword id="KW-1185">Reference proteome</keyword>
<keyword id="KW-0964">Secreted</keyword>
<keyword id="KW-0732">Signal</keyword>
<evidence type="ECO:0000250" key="1"/>
<evidence type="ECO:0000255" key="2"/>
<evidence type="ECO:0000269" key="3">
    <source>
    </source>
</evidence>
<evidence type="ECO:0000269" key="4">
    <source>
    </source>
</evidence>
<evidence type="ECO:0000303" key="5">
    <source>
    </source>
</evidence>
<evidence type="ECO:0000305" key="6"/>
<organism>
    <name type="scientific">Drosophila melanogaster</name>
    <name type="common">Fruit fly</name>
    <dbReference type="NCBI Taxonomy" id="7227"/>
    <lineage>
        <taxon>Eukaryota</taxon>
        <taxon>Metazoa</taxon>
        <taxon>Ecdysozoa</taxon>
        <taxon>Arthropoda</taxon>
        <taxon>Hexapoda</taxon>
        <taxon>Insecta</taxon>
        <taxon>Pterygota</taxon>
        <taxon>Neoptera</taxon>
        <taxon>Endopterygota</taxon>
        <taxon>Diptera</taxon>
        <taxon>Brachycera</taxon>
        <taxon>Muscomorpha</taxon>
        <taxon>Ephydroidea</taxon>
        <taxon>Drosophilidae</taxon>
        <taxon>Drosophila</taxon>
        <taxon>Sophophora</taxon>
    </lineage>
</organism>
<comment type="function">
    <text evidence="3">Regulation of fluid secretion. Stimulates Malpighian tubules fluid secretion by activating the apical membrane V-ATPase via cyclic AMP of principal cells in the main secretory segment.</text>
</comment>
<comment type="subcellular location">
    <subcellularLocation>
        <location evidence="1">Secreted</location>
    </subcellularLocation>
</comment>
<comment type="mass spectrometry"/>
<comment type="similarity">
    <text evidence="6">Belongs to the diuretic hormone class 2 family.</text>
</comment>
<name>DIUX_DROME</name>
<feature type="signal peptide" evidence="2">
    <location>
        <begin position="1"/>
        <end position="25"/>
    </location>
</feature>
<feature type="propeptide" id="PRO_0000006257" evidence="2">
    <location>
        <begin position="26"/>
        <end position="75"/>
    </location>
</feature>
<feature type="peptide" id="PRO_0000006258" description="Diuretic hormone class 2" evidence="4">
    <location>
        <begin position="76"/>
        <end position="106"/>
    </location>
</feature>
<feature type="propeptide" id="PRO_0000006259" evidence="2">
    <location>
        <begin position="112"/>
        <end position="116"/>
    </location>
</feature>
<feature type="modified residue" description="Proline amide" evidence="4">
    <location>
        <position position="106"/>
    </location>
</feature>